<reference key="1">
    <citation type="journal article" date="2007" name="Genome Biol.">
        <title>Genome analysis and genome-wide proteomics of Thermococcus gammatolerans, the most radioresistant organism known amongst the Archaea.</title>
        <authorList>
            <person name="Zivanovic Y."/>
            <person name="Armengaud J."/>
            <person name="Lagorce A."/>
            <person name="Leplat C."/>
            <person name="Guerin P."/>
            <person name="Dutertre M."/>
            <person name="Anthouard V."/>
            <person name="Forterre P."/>
            <person name="Wincker P."/>
            <person name="Confalonieri F."/>
        </authorList>
    </citation>
    <scope>NUCLEOTIDE SEQUENCE [LARGE SCALE GENOMIC DNA]</scope>
    <source>
        <strain>DSM 15229 / JCM 11827 / EJ3</strain>
    </source>
</reference>
<evidence type="ECO:0000255" key="1">
    <source>
        <dbReference type="HAMAP-Rule" id="MF_00192"/>
    </source>
</evidence>
<comment type="function">
    <text evidence="1">DNA-dependent RNA polymerase (RNAP) catalyzes the transcription of DNA into RNA using the four ribonucleoside triphosphates as substrates.</text>
</comment>
<comment type="catalytic activity">
    <reaction evidence="1">
        <text>RNA(n) + a ribonucleoside 5'-triphosphate = RNA(n+1) + diphosphate</text>
        <dbReference type="Rhea" id="RHEA:21248"/>
        <dbReference type="Rhea" id="RHEA-COMP:14527"/>
        <dbReference type="Rhea" id="RHEA-COMP:17342"/>
        <dbReference type="ChEBI" id="CHEBI:33019"/>
        <dbReference type="ChEBI" id="CHEBI:61557"/>
        <dbReference type="ChEBI" id="CHEBI:140395"/>
        <dbReference type="EC" id="2.7.7.6"/>
    </reaction>
</comment>
<comment type="subunit">
    <text evidence="1">Part of the RNA polymerase complex.</text>
</comment>
<comment type="subcellular location">
    <subcellularLocation>
        <location evidence="1">Cytoplasm</location>
    </subcellularLocation>
</comment>
<comment type="similarity">
    <text evidence="1">Belongs to the archaeal Rpo6/eukaryotic RPB6 RNA polymerase subunit family.</text>
</comment>
<gene>
    <name evidence="1" type="primary">rpo6</name>
    <name evidence="1" type="synonym">rpoK</name>
    <name type="ordered locus">TGAM_1961</name>
</gene>
<accession>C5A244</accession>
<organism>
    <name type="scientific">Thermococcus gammatolerans (strain DSM 15229 / JCM 11827 / EJ3)</name>
    <dbReference type="NCBI Taxonomy" id="593117"/>
    <lineage>
        <taxon>Archaea</taxon>
        <taxon>Methanobacteriati</taxon>
        <taxon>Methanobacteriota</taxon>
        <taxon>Thermococci</taxon>
        <taxon>Thermococcales</taxon>
        <taxon>Thermococcaceae</taxon>
        <taxon>Thermococcus</taxon>
    </lineage>
</organism>
<feature type="chain" id="PRO_1000204016" description="DNA-directed RNA polymerase subunit Rpo6">
    <location>
        <begin position="1"/>
        <end position="57"/>
    </location>
</feature>
<sequence length="57" mass="6235">MFRYTRFEKARIIGARALQIALGAPVLVDVPEGSTPLQAAIIEFEKGIIPITVIRPS</sequence>
<protein>
    <recommendedName>
        <fullName evidence="1">DNA-directed RNA polymerase subunit Rpo6</fullName>
        <ecNumber evidence="1">2.7.7.6</ecNumber>
    </recommendedName>
    <alternativeName>
        <fullName evidence="1">DNA-directed RNA polymerase subunit K</fullName>
    </alternativeName>
</protein>
<proteinExistence type="inferred from homology"/>
<keyword id="KW-0963">Cytoplasm</keyword>
<keyword id="KW-0240">DNA-directed RNA polymerase</keyword>
<keyword id="KW-0548">Nucleotidyltransferase</keyword>
<keyword id="KW-1185">Reference proteome</keyword>
<keyword id="KW-0804">Transcription</keyword>
<keyword id="KW-0808">Transferase</keyword>
<name>RPO6_THEGJ</name>
<dbReference type="EC" id="2.7.7.6" evidence="1"/>
<dbReference type="EMBL" id="CP001398">
    <property type="protein sequence ID" value="ACS34463.1"/>
    <property type="molecule type" value="Genomic_DNA"/>
</dbReference>
<dbReference type="RefSeq" id="WP_014122447.1">
    <property type="nucleotide sequence ID" value="NC_012804.1"/>
</dbReference>
<dbReference type="SMR" id="C5A244"/>
<dbReference type="STRING" id="593117.TGAM_1961"/>
<dbReference type="PaxDb" id="593117-TGAM_1961"/>
<dbReference type="GeneID" id="7987018"/>
<dbReference type="KEGG" id="tga:TGAM_1961"/>
<dbReference type="PATRIC" id="fig|593117.10.peg.1971"/>
<dbReference type="eggNOG" id="arCOG01268">
    <property type="taxonomic scope" value="Archaea"/>
</dbReference>
<dbReference type="HOGENOM" id="CLU_112527_5_0_2"/>
<dbReference type="OrthoDB" id="10567at2157"/>
<dbReference type="Proteomes" id="UP000001488">
    <property type="component" value="Chromosome"/>
</dbReference>
<dbReference type="GO" id="GO:0005737">
    <property type="term" value="C:cytoplasm"/>
    <property type="evidence" value="ECO:0007669"/>
    <property type="project" value="UniProtKB-SubCell"/>
</dbReference>
<dbReference type="GO" id="GO:0000428">
    <property type="term" value="C:DNA-directed RNA polymerase complex"/>
    <property type="evidence" value="ECO:0007669"/>
    <property type="project" value="UniProtKB-KW"/>
</dbReference>
<dbReference type="GO" id="GO:0003677">
    <property type="term" value="F:DNA binding"/>
    <property type="evidence" value="ECO:0007669"/>
    <property type="project" value="UniProtKB-UniRule"/>
</dbReference>
<dbReference type="GO" id="GO:0003899">
    <property type="term" value="F:DNA-directed RNA polymerase activity"/>
    <property type="evidence" value="ECO:0007669"/>
    <property type="project" value="UniProtKB-UniRule"/>
</dbReference>
<dbReference type="GO" id="GO:0006360">
    <property type="term" value="P:transcription by RNA polymerase I"/>
    <property type="evidence" value="ECO:0007669"/>
    <property type="project" value="TreeGrafter"/>
</dbReference>
<dbReference type="GO" id="GO:0006366">
    <property type="term" value="P:transcription by RNA polymerase II"/>
    <property type="evidence" value="ECO:0007669"/>
    <property type="project" value="TreeGrafter"/>
</dbReference>
<dbReference type="GO" id="GO:0042797">
    <property type="term" value="P:tRNA transcription by RNA polymerase III"/>
    <property type="evidence" value="ECO:0007669"/>
    <property type="project" value="TreeGrafter"/>
</dbReference>
<dbReference type="Gene3D" id="3.90.940.10">
    <property type="match status" value="1"/>
</dbReference>
<dbReference type="HAMAP" id="MF_00192">
    <property type="entry name" value="RNApol_arch_Rpo6"/>
    <property type="match status" value="1"/>
</dbReference>
<dbReference type="InterPro" id="IPR020708">
    <property type="entry name" value="DNA-dir_RNA_polK_14-18kDa_CS"/>
</dbReference>
<dbReference type="InterPro" id="IPR006110">
    <property type="entry name" value="Pol_omega/Rpo6/RPB6"/>
</dbReference>
<dbReference type="InterPro" id="IPR036161">
    <property type="entry name" value="RPB6/omega-like_sf"/>
</dbReference>
<dbReference type="InterPro" id="IPR006111">
    <property type="entry name" value="Rpo6/Rpb6"/>
</dbReference>
<dbReference type="NCBIfam" id="NF002208">
    <property type="entry name" value="PRK01099.1-3"/>
    <property type="match status" value="1"/>
</dbReference>
<dbReference type="PANTHER" id="PTHR47227">
    <property type="entry name" value="DNA-DIRECTED RNA POLYMERASE SUBUNIT K"/>
    <property type="match status" value="1"/>
</dbReference>
<dbReference type="PANTHER" id="PTHR47227:SF5">
    <property type="entry name" value="DNA-DIRECTED RNA POLYMERASES I, II, AND III SUBUNIT RPABC2"/>
    <property type="match status" value="1"/>
</dbReference>
<dbReference type="Pfam" id="PF01192">
    <property type="entry name" value="RNA_pol_Rpb6"/>
    <property type="match status" value="1"/>
</dbReference>
<dbReference type="PIRSF" id="PIRSF000778">
    <property type="entry name" value="RpoK/RPB6"/>
    <property type="match status" value="1"/>
</dbReference>
<dbReference type="SUPFAM" id="SSF63562">
    <property type="entry name" value="RPB6/omega subunit-like"/>
    <property type="match status" value="1"/>
</dbReference>
<dbReference type="PROSITE" id="PS01111">
    <property type="entry name" value="RNA_POL_K_14KD"/>
    <property type="match status" value="1"/>
</dbReference>